<reference key="1">
    <citation type="journal article" date="2002" name="Nucleic Acids Res.">
        <title>The complete genomic sequence of Mycoplasma penetrans, an intracellular bacterial pathogen in humans.</title>
        <authorList>
            <person name="Sasaki Y."/>
            <person name="Ishikawa J."/>
            <person name="Yamashita A."/>
            <person name="Oshima K."/>
            <person name="Kenri T."/>
            <person name="Furuya K."/>
            <person name="Yoshino C."/>
            <person name="Horino A."/>
            <person name="Shiba T."/>
            <person name="Sasaki T."/>
            <person name="Hattori M."/>
        </authorList>
    </citation>
    <scope>NUCLEOTIDE SEQUENCE [LARGE SCALE GENOMIC DNA]</scope>
    <source>
        <strain>HF-2</strain>
    </source>
</reference>
<comment type="function">
    <text evidence="1">Hydrolyzes ribosome-free peptidyl-tRNAs (with 1 or more amino acids incorporated), which drop off the ribosome during protein synthesis, or as a result of ribosome stalling.</text>
</comment>
<comment type="function">
    <text evidence="1">Catalyzes the release of premature peptidyl moieties from peptidyl-tRNA molecules trapped in stalled 50S ribosomal subunits, and thus maintains levels of free tRNAs and 50S ribosomes.</text>
</comment>
<comment type="catalytic activity">
    <reaction evidence="1">
        <text>an N-acyl-L-alpha-aminoacyl-tRNA + H2O = an N-acyl-L-amino acid + a tRNA + H(+)</text>
        <dbReference type="Rhea" id="RHEA:54448"/>
        <dbReference type="Rhea" id="RHEA-COMP:10123"/>
        <dbReference type="Rhea" id="RHEA-COMP:13883"/>
        <dbReference type="ChEBI" id="CHEBI:15377"/>
        <dbReference type="ChEBI" id="CHEBI:15378"/>
        <dbReference type="ChEBI" id="CHEBI:59874"/>
        <dbReference type="ChEBI" id="CHEBI:78442"/>
        <dbReference type="ChEBI" id="CHEBI:138191"/>
        <dbReference type="EC" id="3.1.1.29"/>
    </reaction>
</comment>
<comment type="subunit">
    <text evidence="1">Monomer.</text>
</comment>
<comment type="subcellular location">
    <subcellularLocation>
        <location evidence="1">Cytoplasm</location>
    </subcellularLocation>
</comment>
<comment type="similarity">
    <text evidence="1">Belongs to the PTH family.</text>
</comment>
<feature type="chain" id="PRO_0000187776" description="Peptidyl-tRNA hydrolase">
    <location>
        <begin position="1"/>
        <end position="187"/>
    </location>
</feature>
<feature type="active site" description="Proton acceptor" evidence="1">
    <location>
        <position position="21"/>
    </location>
</feature>
<feature type="binding site" evidence="1">
    <location>
        <position position="16"/>
    </location>
    <ligand>
        <name>tRNA</name>
        <dbReference type="ChEBI" id="CHEBI:17843"/>
    </ligand>
</feature>
<feature type="binding site" evidence="1">
    <location>
        <position position="66"/>
    </location>
    <ligand>
        <name>tRNA</name>
        <dbReference type="ChEBI" id="CHEBI:17843"/>
    </ligand>
</feature>
<feature type="binding site" evidence="1">
    <location>
        <position position="68"/>
    </location>
    <ligand>
        <name>tRNA</name>
        <dbReference type="ChEBI" id="CHEBI:17843"/>
    </ligand>
</feature>
<feature type="binding site" evidence="1">
    <location>
        <position position="114"/>
    </location>
    <ligand>
        <name>tRNA</name>
        <dbReference type="ChEBI" id="CHEBI:17843"/>
    </ligand>
</feature>
<feature type="site" description="Discriminates between blocked and unblocked aminoacyl-tRNA" evidence="1">
    <location>
        <position position="11"/>
    </location>
</feature>
<feature type="site" description="Stabilizes the basic form of H active site to accept a proton" evidence="1">
    <location>
        <position position="93"/>
    </location>
</feature>
<accession>Q8EWQ8</accession>
<organism>
    <name type="scientific">Malacoplasma penetrans (strain HF-2)</name>
    <name type="common">Mycoplasma penetrans</name>
    <dbReference type="NCBI Taxonomy" id="272633"/>
    <lineage>
        <taxon>Bacteria</taxon>
        <taxon>Bacillati</taxon>
        <taxon>Mycoplasmatota</taxon>
        <taxon>Mycoplasmoidales</taxon>
        <taxon>Mycoplasmoidaceae</taxon>
        <taxon>Malacoplasma</taxon>
    </lineage>
</organism>
<name>PTH_MALP2</name>
<sequence length="187" mass="21328">MSKYLVVGLGNPGLEYEKTKHNVGFMCIDELLKEHTLFLNNSKFNGQFVKVDQPEDQIFIAKPMTYMNNSGEFVYEICKFYKIHEQNILVIYDDIDTDVGKIRVKAKGSSGGQNGIKSIISKMNTEKIKRIRIGIGKPVHNLTHHVLTKFSAEDSIKVQQAIIKAKDACNEFLNHVDFDKIMNKFNV</sequence>
<proteinExistence type="inferred from homology"/>
<evidence type="ECO:0000255" key="1">
    <source>
        <dbReference type="HAMAP-Rule" id="MF_00083"/>
    </source>
</evidence>
<keyword id="KW-0963">Cytoplasm</keyword>
<keyword id="KW-0378">Hydrolase</keyword>
<keyword id="KW-1185">Reference proteome</keyword>
<keyword id="KW-0694">RNA-binding</keyword>
<keyword id="KW-0820">tRNA-binding</keyword>
<protein>
    <recommendedName>
        <fullName evidence="1">Peptidyl-tRNA hydrolase</fullName>
        <shortName evidence="1">Pth</shortName>
        <ecNumber evidence="1">3.1.1.29</ecNumber>
    </recommendedName>
</protein>
<dbReference type="EC" id="3.1.1.29" evidence="1"/>
<dbReference type="EMBL" id="BA000026">
    <property type="protein sequence ID" value="BAC43936.1"/>
    <property type="molecule type" value="Genomic_DNA"/>
</dbReference>
<dbReference type="RefSeq" id="WP_011076972.1">
    <property type="nucleotide sequence ID" value="NC_004432.1"/>
</dbReference>
<dbReference type="SMR" id="Q8EWQ8"/>
<dbReference type="FunCoup" id="Q8EWQ8">
    <property type="interactions" value="231"/>
</dbReference>
<dbReference type="STRING" id="272633.gene:10731244"/>
<dbReference type="KEGG" id="mpe:MYPE1450"/>
<dbReference type="eggNOG" id="COG0193">
    <property type="taxonomic scope" value="Bacteria"/>
</dbReference>
<dbReference type="HOGENOM" id="CLU_062456_4_1_14"/>
<dbReference type="InParanoid" id="Q8EWQ8"/>
<dbReference type="Proteomes" id="UP000002522">
    <property type="component" value="Chromosome"/>
</dbReference>
<dbReference type="GO" id="GO:0005737">
    <property type="term" value="C:cytoplasm"/>
    <property type="evidence" value="ECO:0007669"/>
    <property type="project" value="UniProtKB-SubCell"/>
</dbReference>
<dbReference type="GO" id="GO:0004045">
    <property type="term" value="F:peptidyl-tRNA hydrolase activity"/>
    <property type="evidence" value="ECO:0007669"/>
    <property type="project" value="UniProtKB-UniRule"/>
</dbReference>
<dbReference type="GO" id="GO:0000049">
    <property type="term" value="F:tRNA binding"/>
    <property type="evidence" value="ECO:0007669"/>
    <property type="project" value="UniProtKB-UniRule"/>
</dbReference>
<dbReference type="GO" id="GO:0006515">
    <property type="term" value="P:protein quality control for misfolded or incompletely synthesized proteins"/>
    <property type="evidence" value="ECO:0007669"/>
    <property type="project" value="UniProtKB-UniRule"/>
</dbReference>
<dbReference type="GO" id="GO:0072344">
    <property type="term" value="P:rescue of stalled ribosome"/>
    <property type="evidence" value="ECO:0007669"/>
    <property type="project" value="UniProtKB-UniRule"/>
</dbReference>
<dbReference type="CDD" id="cd00462">
    <property type="entry name" value="PTH"/>
    <property type="match status" value="1"/>
</dbReference>
<dbReference type="FunFam" id="3.40.50.1470:FF:000001">
    <property type="entry name" value="Peptidyl-tRNA hydrolase"/>
    <property type="match status" value="1"/>
</dbReference>
<dbReference type="Gene3D" id="3.40.50.1470">
    <property type="entry name" value="Peptidyl-tRNA hydrolase"/>
    <property type="match status" value="1"/>
</dbReference>
<dbReference type="HAMAP" id="MF_00083">
    <property type="entry name" value="Pept_tRNA_hydro_bact"/>
    <property type="match status" value="1"/>
</dbReference>
<dbReference type="InterPro" id="IPR001328">
    <property type="entry name" value="Pept_tRNA_hydro"/>
</dbReference>
<dbReference type="InterPro" id="IPR018171">
    <property type="entry name" value="Pept_tRNA_hydro_CS"/>
</dbReference>
<dbReference type="InterPro" id="IPR036416">
    <property type="entry name" value="Pept_tRNA_hydro_sf"/>
</dbReference>
<dbReference type="NCBIfam" id="TIGR00447">
    <property type="entry name" value="pth"/>
    <property type="match status" value="1"/>
</dbReference>
<dbReference type="PANTHER" id="PTHR17224">
    <property type="entry name" value="PEPTIDYL-TRNA HYDROLASE"/>
    <property type="match status" value="1"/>
</dbReference>
<dbReference type="PANTHER" id="PTHR17224:SF1">
    <property type="entry name" value="PEPTIDYL-TRNA HYDROLASE"/>
    <property type="match status" value="1"/>
</dbReference>
<dbReference type="Pfam" id="PF01195">
    <property type="entry name" value="Pept_tRNA_hydro"/>
    <property type="match status" value="1"/>
</dbReference>
<dbReference type="SUPFAM" id="SSF53178">
    <property type="entry name" value="Peptidyl-tRNA hydrolase-like"/>
    <property type="match status" value="1"/>
</dbReference>
<dbReference type="PROSITE" id="PS01195">
    <property type="entry name" value="PEPT_TRNA_HYDROL_1"/>
    <property type="match status" value="1"/>
</dbReference>
<gene>
    <name evidence="1" type="primary">pth</name>
    <name type="ordered locus">MYPE1450</name>
</gene>